<keyword id="KW-0067">ATP-binding</keyword>
<keyword id="KW-0227">DNA damage</keyword>
<keyword id="KW-0234">DNA repair</keyword>
<keyword id="KW-0238">DNA-binding</keyword>
<keyword id="KW-0347">Helicase</keyword>
<keyword id="KW-0378">Hydrolase</keyword>
<keyword id="KW-0547">Nucleotide-binding</keyword>
<keyword id="KW-0539">Nucleus</keyword>
<keyword id="KW-1185">Reference proteome</keyword>
<comment type="function">
    <text evidence="2">ATP-dependent DNA helicase involved in DNA damage repair by homologous recombination and in genome maintenance. Capable of unwinding D-loops. Plays a role in limiting crossover recombinants during mitotic DNA double-strand break (DSB) repair. Component of a FANCM-MHF complex which promotes gene conversion at blocked replication forks, probably by reversal of the stalled fork.</text>
</comment>
<comment type="catalytic activity">
    <reaction evidence="2">
        <text>ATP + H2O = ADP + phosphate + H(+)</text>
        <dbReference type="Rhea" id="RHEA:13065"/>
        <dbReference type="ChEBI" id="CHEBI:15377"/>
        <dbReference type="ChEBI" id="CHEBI:15378"/>
        <dbReference type="ChEBI" id="CHEBI:30616"/>
        <dbReference type="ChEBI" id="CHEBI:43474"/>
        <dbReference type="ChEBI" id="CHEBI:456216"/>
        <dbReference type="EC" id="3.6.4.12"/>
    </reaction>
</comment>
<comment type="subunit">
    <text evidence="2">Interacts with the MHF histone-fold complex to form the FANCM-MHF complex.</text>
</comment>
<comment type="subcellular location">
    <subcellularLocation>
        <location evidence="1">Nucleus</location>
    </subcellularLocation>
</comment>
<comment type="similarity">
    <text evidence="6">Belongs to the DEAD box helicase family. DEAH subfamily. FANCM sub-subfamily.</text>
</comment>
<comment type="sequence caution" evidence="6">
    <conflict type="erroneous initiation">
        <sequence resource="EMBL-CDS" id="CAH00763"/>
    </conflict>
</comment>
<gene>
    <name evidence="1" type="primary">MPH1</name>
    <name type="ordered locus">KLLA0D13552g</name>
</gene>
<name>MPH1_KLULA</name>
<proteinExistence type="inferred from homology"/>
<reference key="1">
    <citation type="journal article" date="2004" name="Nature">
        <title>Genome evolution in yeasts.</title>
        <authorList>
            <person name="Dujon B."/>
            <person name="Sherman D."/>
            <person name="Fischer G."/>
            <person name="Durrens P."/>
            <person name="Casaregola S."/>
            <person name="Lafontaine I."/>
            <person name="de Montigny J."/>
            <person name="Marck C."/>
            <person name="Neuveglise C."/>
            <person name="Talla E."/>
            <person name="Goffard N."/>
            <person name="Frangeul L."/>
            <person name="Aigle M."/>
            <person name="Anthouard V."/>
            <person name="Babour A."/>
            <person name="Barbe V."/>
            <person name="Barnay S."/>
            <person name="Blanchin S."/>
            <person name="Beckerich J.-M."/>
            <person name="Beyne E."/>
            <person name="Bleykasten C."/>
            <person name="Boisrame A."/>
            <person name="Boyer J."/>
            <person name="Cattolico L."/>
            <person name="Confanioleri F."/>
            <person name="de Daruvar A."/>
            <person name="Despons L."/>
            <person name="Fabre E."/>
            <person name="Fairhead C."/>
            <person name="Ferry-Dumazet H."/>
            <person name="Groppi A."/>
            <person name="Hantraye F."/>
            <person name="Hennequin C."/>
            <person name="Jauniaux N."/>
            <person name="Joyet P."/>
            <person name="Kachouri R."/>
            <person name="Kerrest A."/>
            <person name="Koszul R."/>
            <person name="Lemaire M."/>
            <person name="Lesur I."/>
            <person name="Ma L."/>
            <person name="Muller H."/>
            <person name="Nicaud J.-M."/>
            <person name="Nikolski M."/>
            <person name="Oztas S."/>
            <person name="Ozier-Kalogeropoulos O."/>
            <person name="Pellenz S."/>
            <person name="Potier S."/>
            <person name="Richard G.-F."/>
            <person name="Straub M.-L."/>
            <person name="Suleau A."/>
            <person name="Swennen D."/>
            <person name="Tekaia F."/>
            <person name="Wesolowski-Louvel M."/>
            <person name="Westhof E."/>
            <person name="Wirth B."/>
            <person name="Zeniou-Meyer M."/>
            <person name="Zivanovic Y."/>
            <person name="Bolotin-Fukuhara M."/>
            <person name="Thierry A."/>
            <person name="Bouchier C."/>
            <person name="Caudron B."/>
            <person name="Scarpelli C."/>
            <person name="Gaillardin C."/>
            <person name="Weissenbach J."/>
            <person name="Wincker P."/>
            <person name="Souciet J.-L."/>
        </authorList>
    </citation>
    <scope>NUCLEOTIDE SEQUENCE [LARGE SCALE GENOMIC DNA]</scope>
    <source>
        <strain>ATCC 8585 / CBS 2359 / DSM 70799 / NBRC 1267 / NRRL Y-1140 / WM37</strain>
    </source>
</reference>
<feature type="chain" id="PRO_0000333375" description="ATP-dependent DNA helicase MPH1">
    <location>
        <begin position="1"/>
        <end position="1002"/>
    </location>
</feature>
<feature type="domain" description="Helicase ATP-binding" evidence="3">
    <location>
        <begin position="108"/>
        <end position="275"/>
    </location>
</feature>
<feature type="domain" description="Helicase C-terminal" evidence="4">
    <location>
        <begin position="506"/>
        <end position="669"/>
    </location>
</feature>
<feature type="region of interest" description="Disordered" evidence="5">
    <location>
        <begin position="531"/>
        <end position="569"/>
    </location>
</feature>
<feature type="region of interest" description="Disordered" evidence="5">
    <location>
        <begin position="799"/>
        <end position="843"/>
    </location>
</feature>
<feature type="short sequence motif" description="DEAH box" evidence="3">
    <location>
        <begin position="223"/>
        <end position="226"/>
    </location>
</feature>
<feature type="compositionally biased region" description="Basic and acidic residues" evidence="5">
    <location>
        <begin position="531"/>
        <end position="551"/>
    </location>
</feature>
<feature type="compositionally biased region" description="Polar residues" evidence="5">
    <location>
        <begin position="553"/>
        <end position="568"/>
    </location>
</feature>
<feature type="binding site" evidence="3">
    <location>
        <begin position="121"/>
        <end position="128"/>
    </location>
    <ligand>
        <name>ATP</name>
        <dbReference type="ChEBI" id="CHEBI:30616"/>
    </ligand>
</feature>
<sequence>MFCKQKHKTRKKPAVNALMADLSDLSDDDLESLLENNVNRSVNQTVTRHRIPVQRDLFMNVLPNQQTFYEETHTDVSYGPTHHQLNEENLDEYIYPTNYEVRQYQYDIVRCALFENVLCAIPTGTGKTFIASTVMLNYYRWTKSSKIIFTAPTRPLVAQQIKACLGITGIPYSDTAILLDKSRKNREEIWQQKRVFFTTPQVVENDLKRGVLNPKDVVLLVIDEAHRARGNYAYVELTKFIDRFNTSYRLLALTATPAADLEGVQEVVNNLHISKIELRTEDSLDVARYMMRRDREMIEIGLIPEIEEVVEQIGIAIAPVLQEAIQLGIYESCEPHQINAFVAMQQSQKIILNPSIPEGLKWKNFFILQLLSQVGHMYRRLRIYGLRAFYNYFQNKYTEFTTKYSMKKSTNKTAANFFYSPILKTVIDKCKRRLEEPEFYSHEKLEYLNNELADFFTMAPSDSRAIIFTELRESALEIVKSIDILNDGALRPHIFIGQAKGKEHFDEETYIRKNKPKGRTKAARLRRIEEENRVEEEKKRQKEQAKLERTGRRTGSSEEAQLSGMNQKQQKKVISDFKKGIYNVLVCTSIGEEGLDIGEVDLIICFDSTSSPIKNIQRMGRTGRKRDGRIVLLFSGNEKFKFEQAMNDYENLQTAITHNALEYTKSDRILPPNVQPKCEEKFIIISNENDEVNKLEDSDEVIKYATQAMLGKLKTKKKEPKPKKTTAKAKKSSDKTFFMPDNVKEGFTSASSLLNKYTINEFGEKISLTPSVSKKAIKPKKEWNMLDEIEYDSVEISPAKSQVEQPSQPHKPTTTQGILTPDETTNHIPSASQGSSVQTDSHTVQEPVLKKLKLAHQIEDPSTSIEYYSGYELVPQYGATDSAQMLTMQEQRHFLKKYVPDTVHWSIAPDLAKSKTRKIRHVPKIEEILNTCQDMHTNTREKIIGMNRTNALARSIGYNRSVGMELEVMLPSIVVPNETITNAKNMTDLLEDEDGLSDFLSD</sequence>
<organism>
    <name type="scientific">Kluyveromyces lactis (strain ATCC 8585 / CBS 2359 / DSM 70799 / NBRC 1267 / NRRL Y-1140 / WM37)</name>
    <name type="common">Yeast</name>
    <name type="synonym">Candida sphaerica</name>
    <dbReference type="NCBI Taxonomy" id="284590"/>
    <lineage>
        <taxon>Eukaryota</taxon>
        <taxon>Fungi</taxon>
        <taxon>Dikarya</taxon>
        <taxon>Ascomycota</taxon>
        <taxon>Saccharomycotina</taxon>
        <taxon>Saccharomycetes</taxon>
        <taxon>Saccharomycetales</taxon>
        <taxon>Saccharomycetaceae</taxon>
        <taxon>Kluyveromyces</taxon>
    </lineage>
</organism>
<evidence type="ECO:0000250" key="1">
    <source>
        <dbReference type="UniProtKB" id="P40562"/>
    </source>
</evidence>
<evidence type="ECO:0000250" key="2">
    <source>
        <dbReference type="UniProtKB" id="Q9UT23"/>
    </source>
</evidence>
<evidence type="ECO:0000255" key="3">
    <source>
        <dbReference type="PROSITE-ProRule" id="PRU00541"/>
    </source>
</evidence>
<evidence type="ECO:0000255" key="4">
    <source>
        <dbReference type="PROSITE-ProRule" id="PRU00542"/>
    </source>
</evidence>
<evidence type="ECO:0000256" key="5">
    <source>
        <dbReference type="SAM" id="MobiDB-lite"/>
    </source>
</evidence>
<evidence type="ECO:0000305" key="6"/>
<dbReference type="EC" id="3.6.4.12" evidence="1 2"/>
<dbReference type="EMBL" id="CR382124">
    <property type="protein sequence ID" value="CAH00763.2"/>
    <property type="status" value="ALT_INIT"/>
    <property type="molecule type" value="Genomic_DNA"/>
</dbReference>
<dbReference type="RefSeq" id="XP_453667.2">
    <property type="nucleotide sequence ID" value="XM_453667.2"/>
</dbReference>
<dbReference type="SMR" id="Q6CQX2"/>
<dbReference type="FunCoup" id="Q6CQX2">
    <property type="interactions" value="270"/>
</dbReference>
<dbReference type="STRING" id="284590.Q6CQX2"/>
<dbReference type="PaxDb" id="284590-Q6CQX2"/>
<dbReference type="KEGG" id="kla:KLLA0_D13552g"/>
<dbReference type="eggNOG" id="KOG0354">
    <property type="taxonomic scope" value="Eukaryota"/>
</dbReference>
<dbReference type="HOGENOM" id="CLU_002513_1_0_1"/>
<dbReference type="InParanoid" id="Q6CQX2"/>
<dbReference type="Proteomes" id="UP000000598">
    <property type="component" value="Chromosome D"/>
</dbReference>
<dbReference type="GO" id="GO:0005634">
    <property type="term" value="C:nucleus"/>
    <property type="evidence" value="ECO:0007669"/>
    <property type="project" value="UniProtKB-SubCell"/>
</dbReference>
<dbReference type="GO" id="GO:0043138">
    <property type="term" value="F:3'-5' DNA helicase activity"/>
    <property type="evidence" value="ECO:0007669"/>
    <property type="project" value="InterPro"/>
</dbReference>
<dbReference type="GO" id="GO:0005524">
    <property type="term" value="F:ATP binding"/>
    <property type="evidence" value="ECO:0007669"/>
    <property type="project" value="UniProtKB-KW"/>
</dbReference>
<dbReference type="GO" id="GO:0016887">
    <property type="term" value="F:ATP hydrolysis activity"/>
    <property type="evidence" value="ECO:0007669"/>
    <property type="project" value="RHEA"/>
</dbReference>
<dbReference type="GO" id="GO:0000400">
    <property type="term" value="F:four-way junction DNA binding"/>
    <property type="evidence" value="ECO:0007669"/>
    <property type="project" value="TreeGrafter"/>
</dbReference>
<dbReference type="GO" id="GO:0009378">
    <property type="term" value="F:four-way junction helicase activity"/>
    <property type="evidence" value="ECO:0007669"/>
    <property type="project" value="TreeGrafter"/>
</dbReference>
<dbReference type="GO" id="GO:0045003">
    <property type="term" value="P:double-strand break repair via synthesis-dependent strand annealing"/>
    <property type="evidence" value="ECO:0007669"/>
    <property type="project" value="TreeGrafter"/>
</dbReference>
<dbReference type="GO" id="GO:0036297">
    <property type="term" value="P:interstrand cross-link repair"/>
    <property type="evidence" value="ECO:0007669"/>
    <property type="project" value="TreeGrafter"/>
</dbReference>
<dbReference type="CDD" id="cd18033">
    <property type="entry name" value="DEXDc_FANCM"/>
    <property type="match status" value="1"/>
</dbReference>
<dbReference type="CDD" id="cd12091">
    <property type="entry name" value="FANCM_ID"/>
    <property type="match status" value="1"/>
</dbReference>
<dbReference type="FunFam" id="3.40.50.300:FF:000861">
    <property type="entry name" value="Fanconi anemia, complementation group M"/>
    <property type="match status" value="1"/>
</dbReference>
<dbReference type="Gene3D" id="3.40.50.300">
    <property type="entry name" value="P-loop containing nucleotide triphosphate hydrolases"/>
    <property type="match status" value="2"/>
</dbReference>
<dbReference type="InterPro" id="IPR011545">
    <property type="entry name" value="DEAD/DEAH_box_helicase_dom"/>
</dbReference>
<dbReference type="InterPro" id="IPR039686">
    <property type="entry name" value="FANCM/Mph1-like_ID"/>
</dbReference>
<dbReference type="InterPro" id="IPR044749">
    <property type="entry name" value="FANCM_DEXDc"/>
</dbReference>
<dbReference type="InterPro" id="IPR014001">
    <property type="entry name" value="Helicase_ATP-bd"/>
</dbReference>
<dbReference type="InterPro" id="IPR001650">
    <property type="entry name" value="Helicase_C-like"/>
</dbReference>
<dbReference type="InterPro" id="IPR027417">
    <property type="entry name" value="P-loop_NTPase"/>
</dbReference>
<dbReference type="PANTHER" id="PTHR14025">
    <property type="entry name" value="FANCONI ANEMIA GROUP M FANCM FAMILY MEMBER"/>
    <property type="match status" value="1"/>
</dbReference>
<dbReference type="PANTHER" id="PTHR14025:SF20">
    <property type="entry name" value="FANCONI ANEMIA GROUP M PROTEIN"/>
    <property type="match status" value="1"/>
</dbReference>
<dbReference type="Pfam" id="PF00270">
    <property type="entry name" value="DEAD"/>
    <property type="match status" value="1"/>
</dbReference>
<dbReference type="Pfam" id="PF00271">
    <property type="entry name" value="Helicase_C"/>
    <property type="match status" value="1"/>
</dbReference>
<dbReference type="SMART" id="SM00487">
    <property type="entry name" value="DEXDc"/>
    <property type="match status" value="1"/>
</dbReference>
<dbReference type="SMART" id="SM00490">
    <property type="entry name" value="HELICc"/>
    <property type="match status" value="1"/>
</dbReference>
<dbReference type="SUPFAM" id="SSF52540">
    <property type="entry name" value="P-loop containing nucleoside triphosphate hydrolases"/>
    <property type="match status" value="1"/>
</dbReference>
<dbReference type="PROSITE" id="PS51192">
    <property type="entry name" value="HELICASE_ATP_BIND_1"/>
    <property type="match status" value="1"/>
</dbReference>
<dbReference type="PROSITE" id="PS51194">
    <property type="entry name" value="HELICASE_CTER"/>
    <property type="match status" value="1"/>
</dbReference>
<protein>
    <recommendedName>
        <fullName evidence="1">ATP-dependent DNA helicase MPH1</fullName>
        <ecNumber evidence="1 2">3.6.4.12</ecNumber>
    </recommendedName>
    <alternativeName>
        <fullName evidence="2">FANCM-like protein 1</fullName>
    </alternativeName>
</protein>
<accession>Q6CQX2</accession>